<reference key="1">
    <citation type="submission" date="1991-06" db="EMBL/GenBank/DDBJ databases">
        <authorList>
            <person name="Kim S."/>
            <person name="Wulff D.L."/>
        </authorList>
    </citation>
    <scope>NUCLEOTIDE SEQUENCE [GENOMIC DNA]</scope>
    <source>
        <strain>K12</strain>
    </source>
</reference>
<reference key="2">
    <citation type="journal article" date="1995" name="Mol. Microbiol.">
        <title>Characterization of the osmotically inducible gene osmE of Escherichia coli K-12.</title>
        <authorList>
            <person name="Gutierrez C."/>
            <person name="Gordia S."/>
            <person name="Bonassie S."/>
        </authorList>
    </citation>
    <scope>NUCLEOTIDE SEQUENCE [GENOMIC DNA]</scope>
    <scope>INDUCTION</scope>
    <source>
        <strain>K12</strain>
    </source>
</reference>
<reference key="3">
    <citation type="journal article" date="1996" name="DNA Res.">
        <title>A 570-kb DNA sequence of the Escherichia coli K-12 genome corresponding to the 28.0-40.1 min region on the linkage map.</title>
        <authorList>
            <person name="Aiba H."/>
            <person name="Baba T."/>
            <person name="Fujita K."/>
            <person name="Hayashi K."/>
            <person name="Inada T."/>
            <person name="Isono K."/>
            <person name="Itoh T."/>
            <person name="Kasai H."/>
            <person name="Kashimoto K."/>
            <person name="Kimura S."/>
            <person name="Kitakawa M."/>
            <person name="Kitagawa M."/>
            <person name="Makino K."/>
            <person name="Miki T."/>
            <person name="Mizobuchi K."/>
            <person name="Mori H."/>
            <person name="Mori T."/>
            <person name="Motomura K."/>
            <person name="Nakade S."/>
            <person name="Nakamura Y."/>
            <person name="Nashimoto H."/>
            <person name="Nishio Y."/>
            <person name="Oshima T."/>
            <person name="Saito N."/>
            <person name="Sampei G."/>
            <person name="Seki Y."/>
            <person name="Sivasundaram S."/>
            <person name="Tagami H."/>
            <person name="Takeda J."/>
            <person name="Takemoto K."/>
            <person name="Takeuchi Y."/>
            <person name="Wada C."/>
            <person name="Yamamoto Y."/>
            <person name="Horiuchi T."/>
        </authorList>
    </citation>
    <scope>NUCLEOTIDE SEQUENCE [LARGE SCALE GENOMIC DNA]</scope>
    <source>
        <strain>K12 / W3110 / ATCC 27325 / DSM 5911</strain>
    </source>
</reference>
<reference key="4">
    <citation type="journal article" date="1997" name="Science">
        <title>The complete genome sequence of Escherichia coli K-12.</title>
        <authorList>
            <person name="Blattner F.R."/>
            <person name="Plunkett G. III"/>
            <person name="Bloch C.A."/>
            <person name="Perna N.T."/>
            <person name="Burland V."/>
            <person name="Riley M."/>
            <person name="Collado-Vides J."/>
            <person name="Glasner J.D."/>
            <person name="Rode C.K."/>
            <person name="Mayhew G.F."/>
            <person name="Gregor J."/>
            <person name="Davis N.W."/>
            <person name="Kirkpatrick H.A."/>
            <person name="Goeden M.A."/>
            <person name="Rose D.J."/>
            <person name="Mau B."/>
            <person name="Shao Y."/>
        </authorList>
    </citation>
    <scope>NUCLEOTIDE SEQUENCE [LARGE SCALE GENOMIC DNA]</scope>
    <source>
        <strain>K12 / MG1655 / ATCC 47076</strain>
    </source>
</reference>
<reference key="5">
    <citation type="journal article" date="2006" name="Mol. Syst. Biol.">
        <title>Highly accurate genome sequences of Escherichia coli K-12 strains MG1655 and W3110.</title>
        <authorList>
            <person name="Hayashi K."/>
            <person name="Morooka N."/>
            <person name="Yamamoto Y."/>
            <person name="Fujita K."/>
            <person name="Isono K."/>
            <person name="Choi S."/>
            <person name="Ohtsubo E."/>
            <person name="Baba T."/>
            <person name="Wanner B.L."/>
            <person name="Mori H."/>
            <person name="Horiuchi T."/>
        </authorList>
    </citation>
    <scope>NUCLEOTIDE SEQUENCE [LARGE SCALE GENOMIC DNA]</scope>
    <source>
        <strain>K12 / W3110 / ATCC 27325 / DSM 5911</strain>
    </source>
</reference>
<protein>
    <recommendedName>
        <fullName>Osmotically-inducible putative lipoprotein OsmE</fullName>
    </recommendedName>
    <alternativeName>
        <fullName>Activator of ntr-like gene protein</fullName>
    </alternativeName>
</protein>
<accession>P0ADB1</accession>
<accession>P23933</accession>
<sequence length="112" mass="12021">MNKNMAGILSAAAVLTMLAGCTAYDRTKDQFVQPVVKDVKKGMSRAQVAQIAGKPSSEVSMIHARGTCQTYILGQRDGKAETYFVALDDTGHVINSGYQTCAEYDTDPQAAK</sequence>
<gene>
    <name evidence="2" type="primary">osmE</name>
    <name type="synonym">anr</name>
    <name type="ordered locus">b1739</name>
    <name type="ordered locus">JW1728</name>
</gene>
<organism>
    <name type="scientific">Escherichia coli (strain K12)</name>
    <dbReference type="NCBI Taxonomy" id="83333"/>
    <lineage>
        <taxon>Bacteria</taxon>
        <taxon>Pseudomonadati</taxon>
        <taxon>Pseudomonadota</taxon>
        <taxon>Gammaproteobacteria</taxon>
        <taxon>Enterobacterales</taxon>
        <taxon>Enterobacteriaceae</taxon>
        <taxon>Escherichia</taxon>
    </lineage>
</organism>
<name>OSME_ECOLI</name>
<proteinExistence type="evidence at transcript level"/>
<comment type="subcellular location">
    <subcellularLocation>
        <location evidence="3">Cell inner membrane</location>
        <topology evidence="3">Lipid-anchor</topology>
    </subcellularLocation>
</comment>
<comment type="induction">
    <text evidence="1">By elevated osmotic pressure in the growth medium.</text>
</comment>
<feature type="signal peptide" evidence="3">
    <location>
        <begin position="1"/>
        <end position="20"/>
    </location>
</feature>
<feature type="chain" id="PRO_0000018071" description="Osmotically-inducible putative lipoprotein OsmE">
    <location>
        <begin position="21"/>
        <end position="112"/>
    </location>
</feature>
<feature type="lipid moiety-binding region" description="N-palmitoyl cysteine" evidence="3">
    <location>
        <position position="21"/>
    </location>
</feature>
<feature type="lipid moiety-binding region" description="S-diacylglycerol cysteine" evidence="3">
    <location>
        <position position="21"/>
    </location>
</feature>
<dbReference type="EMBL" id="X60186">
    <property type="protein sequence ID" value="CAA42743.1"/>
    <property type="molecule type" value="Genomic_DNA"/>
</dbReference>
<dbReference type="EMBL" id="X75957">
    <property type="protein sequence ID" value="CAA53570.1"/>
    <property type="molecule type" value="Genomic_DNA"/>
</dbReference>
<dbReference type="EMBL" id="U00096">
    <property type="protein sequence ID" value="AAC74809.1"/>
    <property type="molecule type" value="Genomic_DNA"/>
</dbReference>
<dbReference type="EMBL" id="AP009048">
    <property type="protein sequence ID" value="BAA15528.1"/>
    <property type="molecule type" value="Genomic_DNA"/>
</dbReference>
<dbReference type="PIR" id="I57918">
    <property type="entry name" value="I57918"/>
</dbReference>
<dbReference type="RefSeq" id="NP_416253.1">
    <property type="nucleotide sequence ID" value="NC_000913.3"/>
</dbReference>
<dbReference type="RefSeq" id="WP_001039044.1">
    <property type="nucleotide sequence ID" value="NZ_STEB01000009.1"/>
</dbReference>
<dbReference type="SMR" id="P0ADB1"/>
<dbReference type="BioGRID" id="4260317">
    <property type="interactions" value="6"/>
</dbReference>
<dbReference type="FunCoup" id="P0ADB1">
    <property type="interactions" value="74"/>
</dbReference>
<dbReference type="IntAct" id="P0ADB1">
    <property type="interactions" value="2"/>
</dbReference>
<dbReference type="STRING" id="511145.b1739"/>
<dbReference type="jPOST" id="P0ADB1"/>
<dbReference type="PaxDb" id="511145-b1739"/>
<dbReference type="EnsemblBacteria" id="AAC74809">
    <property type="protein sequence ID" value="AAC74809"/>
    <property type="gene ID" value="b1739"/>
</dbReference>
<dbReference type="GeneID" id="93775952"/>
<dbReference type="GeneID" id="945305"/>
<dbReference type="KEGG" id="ecj:JW1728"/>
<dbReference type="KEGG" id="eco:b1739"/>
<dbReference type="KEGG" id="ecoc:C3026_09935"/>
<dbReference type="PATRIC" id="fig|1411691.4.peg.517"/>
<dbReference type="EchoBASE" id="EB0042"/>
<dbReference type="eggNOG" id="COG2913">
    <property type="taxonomic scope" value="Bacteria"/>
</dbReference>
<dbReference type="HOGENOM" id="CLU_161369_1_0_6"/>
<dbReference type="InParanoid" id="P0ADB1"/>
<dbReference type="OMA" id="VTMIHAR"/>
<dbReference type="OrthoDB" id="7003922at2"/>
<dbReference type="PhylomeDB" id="P0ADB1"/>
<dbReference type="BioCyc" id="EcoCyc:EG10044-MONOMER"/>
<dbReference type="PRO" id="PR:P0ADB1"/>
<dbReference type="Proteomes" id="UP000000625">
    <property type="component" value="Chromosome"/>
</dbReference>
<dbReference type="GO" id="GO:0019867">
    <property type="term" value="C:outer membrane"/>
    <property type="evidence" value="ECO:0007669"/>
    <property type="project" value="InterPro"/>
</dbReference>
<dbReference type="GO" id="GO:0005886">
    <property type="term" value="C:plasma membrane"/>
    <property type="evidence" value="ECO:0007669"/>
    <property type="project" value="UniProtKB-SubCell"/>
</dbReference>
<dbReference type="GO" id="GO:0006970">
    <property type="term" value="P:response to osmotic stress"/>
    <property type="evidence" value="ECO:0000314"/>
    <property type="project" value="EcoCyc"/>
</dbReference>
<dbReference type="FunFam" id="3.30.1450.10:FF:000002">
    <property type="entry name" value="Osmotically inducible lipoprotein E"/>
    <property type="match status" value="1"/>
</dbReference>
<dbReference type="Gene3D" id="3.30.1450.10">
    <property type="match status" value="1"/>
</dbReference>
<dbReference type="InterPro" id="IPR037873">
    <property type="entry name" value="BamE-like"/>
</dbReference>
<dbReference type="InterPro" id="IPR007450">
    <property type="entry name" value="BamE_dom"/>
</dbReference>
<dbReference type="NCBIfam" id="NF008423">
    <property type="entry name" value="PRK11251.1"/>
    <property type="match status" value="1"/>
</dbReference>
<dbReference type="Pfam" id="PF04355">
    <property type="entry name" value="BamE"/>
    <property type="match status" value="1"/>
</dbReference>
<dbReference type="PROSITE" id="PS51257">
    <property type="entry name" value="PROKAR_LIPOPROTEIN"/>
    <property type="match status" value="1"/>
</dbReference>
<evidence type="ECO:0000269" key="1">
    <source>
    </source>
</evidence>
<evidence type="ECO:0000303" key="2">
    <source>
    </source>
</evidence>
<evidence type="ECO:0000305" key="3"/>
<keyword id="KW-0997">Cell inner membrane</keyword>
<keyword id="KW-1003">Cell membrane</keyword>
<keyword id="KW-0449">Lipoprotein</keyword>
<keyword id="KW-0472">Membrane</keyword>
<keyword id="KW-0564">Palmitate</keyword>
<keyword id="KW-1185">Reference proteome</keyword>
<keyword id="KW-0732">Signal</keyword>